<organism>
    <name type="scientific">Erwinia tasmaniensis (strain DSM 17950 / CFBP 7177 / CIP 109463 / NCPPB 4357 / Et1/99)</name>
    <dbReference type="NCBI Taxonomy" id="465817"/>
    <lineage>
        <taxon>Bacteria</taxon>
        <taxon>Pseudomonadati</taxon>
        <taxon>Pseudomonadota</taxon>
        <taxon>Gammaproteobacteria</taxon>
        <taxon>Enterobacterales</taxon>
        <taxon>Erwiniaceae</taxon>
        <taxon>Erwinia</taxon>
    </lineage>
</organism>
<evidence type="ECO:0000255" key="1">
    <source>
        <dbReference type="HAMAP-Rule" id="MF_01082"/>
    </source>
</evidence>
<proteinExistence type="inferred from homology"/>
<accession>B2VFZ5</accession>
<feature type="chain" id="PRO_1000136837" description="tRNA pseudouridine synthase D">
    <location>
        <begin position="1"/>
        <end position="349"/>
    </location>
</feature>
<feature type="domain" description="TRUD" evidence="1">
    <location>
        <begin position="154"/>
        <end position="303"/>
    </location>
</feature>
<feature type="active site" description="Nucleophile" evidence="1">
    <location>
        <position position="79"/>
    </location>
</feature>
<feature type="binding site" evidence="1">
    <location>
        <position position="26"/>
    </location>
    <ligand>
        <name>substrate</name>
    </ligand>
</feature>
<feature type="binding site" evidence="1">
    <location>
        <position position="128"/>
    </location>
    <ligand>
        <name>substrate</name>
    </ligand>
</feature>
<feature type="binding site" evidence="1">
    <location>
        <position position="329"/>
    </location>
    <ligand>
        <name>substrate</name>
    </ligand>
</feature>
<gene>
    <name evidence="1" type="primary">truD</name>
    <name type="ordered locus">ETA_26990</name>
</gene>
<protein>
    <recommendedName>
        <fullName evidence="1">tRNA pseudouridine synthase D</fullName>
        <ecNumber evidence="1">5.4.99.27</ecNumber>
    </recommendedName>
    <alternativeName>
        <fullName evidence="1">tRNA pseudouridine(13) synthase</fullName>
    </alternativeName>
    <alternativeName>
        <fullName evidence="1">tRNA pseudouridylate synthase D</fullName>
    </alternativeName>
    <alternativeName>
        <fullName evidence="1">tRNA-uridine isomerase D</fullName>
    </alternativeName>
</protein>
<comment type="function">
    <text evidence="1">Responsible for synthesis of pseudouridine from uracil-13 in transfer RNAs.</text>
</comment>
<comment type="catalytic activity">
    <reaction evidence="1">
        <text>uridine(13) in tRNA = pseudouridine(13) in tRNA</text>
        <dbReference type="Rhea" id="RHEA:42540"/>
        <dbReference type="Rhea" id="RHEA-COMP:10105"/>
        <dbReference type="Rhea" id="RHEA-COMP:10106"/>
        <dbReference type="ChEBI" id="CHEBI:65314"/>
        <dbReference type="ChEBI" id="CHEBI:65315"/>
        <dbReference type="EC" id="5.4.99.27"/>
    </reaction>
</comment>
<comment type="similarity">
    <text evidence="1">Belongs to the pseudouridine synthase TruD family.</text>
</comment>
<name>TRUD_ERWT9</name>
<reference key="1">
    <citation type="journal article" date="2008" name="Environ. Microbiol.">
        <title>The genome of Erwinia tasmaniensis strain Et1/99, a non-pathogenic bacterium in the genus Erwinia.</title>
        <authorList>
            <person name="Kube M."/>
            <person name="Migdoll A.M."/>
            <person name="Mueller I."/>
            <person name="Kuhl H."/>
            <person name="Beck A."/>
            <person name="Reinhardt R."/>
            <person name="Geider K."/>
        </authorList>
    </citation>
    <scope>NUCLEOTIDE SEQUENCE [LARGE SCALE GENOMIC DNA]</scope>
    <source>
        <strain>DSM 17950 / CFBP 7177 / CIP 109463 / NCPPB 4357 / Et1/99</strain>
    </source>
</reference>
<sequence length="349" mass="38877">MDLTRQGWLHGQPTASGVLKSTPEDFVVIEDLGYSPDGDGEQLLVRVRKQGCNTRFVAEALAKFAGIPARDVSFAGMKDRHAVTEQWFCLRLPGKVTPDLNAFQLEGVEVLESARHRRKLRIGALQGNAFTLVLRQVSDRDAVEQRLQLITAVGVPNYFGSQRFGHDGNNLKLAQRWAADEIRVRERSKRSFILSAARSAMFNQVVSDRLAQQGSLCRVLAGDALQLTGRGSWFVAETAEMDSLQQRVDNNELRITAPLPGSGEWGTRDDALSFEQQSLAHEGALIALMERERVDAARRAMLVIPRELRWRWADDATLEMSFWLPAGSFATSVVRELIVTQSSSNEADE</sequence>
<keyword id="KW-0413">Isomerase</keyword>
<keyword id="KW-1185">Reference proteome</keyword>
<keyword id="KW-0819">tRNA processing</keyword>
<dbReference type="EC" id="5.4.99.27" evidence="1"/>
<dbReference type="EMBL" id="CU468135">
    <property type="protein sequence ID" value="CAO97745.1"/>
    <property type="molecule type" value="Genomic_DNA"/>
</dbReference>
<dbReference type="RefSeq" id="WP_012442403.1">
    <property type="nucleotide sequence ID" value="NC_010694.1"/>
</dbReference>
<dbReference type="SMR" id="B2VFZ5"/>
<dbReference type="STRING" id="465817.ETA_26990"/>
<dbReference type="KEGG" id="eta:ETA_26990"/>
<dbReference type="eggNOG" id="COG0585">
    <property type="taxonomic scope" value="Bacteria"/>
</dbReference>
<dbReference type="HOGENOM" id="CLU_005281_4_0_6"/>
<dbReference type="OrthoDB" id="1550679at2"/>
<dbReference type="Proteomes" id="UP000001726">
    <property type="component" value="Chromosome"/>
</dbReference>
<dbReference type="GO" id="GO:0005829">
    <property type="term" value="C:cytosol"/>
    <property type="evidence" value="ECO:0007669"/>
    <property type="project" value="TreeGrafter"/>
</dbReference>
<dbReference type="GO" id="GO:0003723">
    <property type="term" value="F:RNA binding"/>
    <property type="evidence" value="ECO:0007669"/>
    <property type="project" value="InterPro"/>
</dbReference>
<dbReference type="GO" id="GO:0160150">
    <property type="term" value="F:tRNA pseudouridine(13) synthase activity"/>
    <property type="evidence" value="ECO:0007669"/>
    <property type="project" value="UniProtKB-EC"/>
</dbReference>
<dbReference type="GO" id="GO:0031119">
    <property type="term" value="P:tRNA pseudouridine synthesis"/>
    <property type="evidence" value="ECO:0007669"/>
    <property type="project" value="UniProtKB-UniRule"/>
</dbReference>
<dbReference type="CDD" id="cd02575">
    <property type="entry name" value="PseudoU_synth_EcTruD"/>
    <property type="match status" value="1"/>
</dbReference>
<dbReference type="FunFam" id="3.30.2350.20:FF:000001">
    <property type="entry name" value="tRNA pseudouridine synthase D"/>
    <property type="match status" value="1"/>
</dbReference>
<dbReference type="Gene3D" id="3.30.2350.20">
    <property type="entry name" value="TruD, catalytic domain"/>
    <property type="match status" value="1"/>
</dbReference>
<dbReference type="Gene3D" id="3.30.2340.10">
    <property type="entry name" value="TruD, insertion domain"/>
    <property type="match status" value="1"/>
</dbReference>
<dbReference type="HAMAP" id="MF_01082">
    <property type="entry name" value="TruD"/>
    <property type="match status" value="1"/>
</dbReference>
<dbReference type="InterPro" id="IPR020103">
    <property type="entry name" value="PsdUridine_synth_cat_dom_sf"/>
</dbReference>
<dbReference type="InterPro" id="IPR001656">
    <property type="entry name" value="PsdUridine_synth_TruD"/>
</dbReference>
<dbReference type="InterPro" id="IPR020119">
    <property type="entry name" value="PsdUridine_synth_TruD_CS"/>
</dbReference>
<dbReference type="InterPro" id="IPR011760">
    <property type="entry name" value="PsdUridine_synth_TruD_insert"/>
</dbReference>
<dbReference type="InterPro" id="IPR042214">
    <property type="entry name" value="TruD_catalytic"/>
</dbReference>
<dbReference type="InterPro" id="IPR043165">
    <property type="entry name" value="TruD_insert_sf"/>
</dbReference>
<dbReference type="InterPro" id="IPR050170">
    <property type="entry name" value="TruD_pseudoU_synthase"/>
</dbReference>
<dbReference type="NCBIfam" id="NF002155">
    <property type="entry name" value="PRK00984.1-4"/>
    <property type="match status" value="1"/>
</dbReference>
<dbReference type="NCBIfam" id="TIGR00094">
    <property type="entry name" value="tRNA_TruD_broad"/>
    <property type="match status" value="1"/>
</dbReference>
<dbReference type="PANTHER" id="PTHR47811">
    <property type="entry name" value="TRNA PSEUDOURIDINE SYNTHASE D"/>
    <property type="match status" value="1"/>
</dbReference>
<dbReference type="PANTHER" id="PTHR47811:SF1">
    <property type="entry name" value="TRNA PSEUDOURIDINE SYNTHASE D"/>
    <property type="match status" value="1"/>
</dbReference>
<dbReference type="Pfam" id="PF01142">
    <property type="entry name" value="TruD"/>
    <property type="match status" value="2"/>
</dbReference>
<dbReference type="SUPFAM" id="SSF55120">
    <property type="entry name" value="Pseudouridine synthase"/>
    <property type="match status" value="1"/>
</dbReference>
<dbReference type="PROSITE" id="PS50984">
    <property type="entry name" value="TRUD"/>
    <property type="match status" value="1"/>
</dbReference>
<dbReference type="PROSITE" id="PS01268">
    <property type="entry name" value="UPF0024"/>
    <property type="match status" value="1"/>
</dbReference>